<proteinExistence type="inferred from homology"/>
<gene>
    <name evidence="1" type="primary">rplU</name>
    <name type="ordered locus">PSPA7_5208</name>
</gene>
<sequence length="103" mass="11654">MYAVIVTGGKQHKVTEGEFLKVEKLDIATGEAIDFDRVLLVANGDDVKIGLPVVEGAKVTAEVVSHGRHDKVRIIKFRRRKHHMKRQGHRQWFTEIKITGIQA</sequence>
<feature type="chain" id="PRO_1000067876" description="Large ribosomal subunit protein bL21">
    <location>
        <begin position="1"/>
        <end position="103"/>
    </location>
</feature>
<organism>
    <name type="scientific">Pseudomonas paraeruginosa (strain DSM 24068 / PA7)</name>
    <name type="common">Pseudomonas aeruginosa (strain PA7)</name>
    <dbReference type="NCBI Taxonomy" id="381754"/>
    <lineage>
        <taxon>Bacteria</taxon>
        <taxon>Pseudomonadati</taxon>
        <taxon>Pseudomonadota</taxon>
        <taxon>Gammaproteobacteria</taxon>
        <taxon>Pseudomonadales</taxon>
        <taxon>Pseudomonadaceae</taxon>
        <taxon>Pseudomonas</taxon>
        <taxon>Pseudomonas paraeruginosa</taxon>
    </lineage>
</organism>
<dbReference type="EMBL" id="CP000744">
    <property type="protein sequence ID" value="ABR86491.1"/>
    <property type="molecule type" value="Genomic_DNA"/>
</dbReference>
<dbReference type="RefSeq" id="WP_003154364.1">
    <property type="nucleotide sequence ID" value="NC_009656.1"/>
</dbReference>
<dbReference type="SMR" id="A6VBV5"/>
<dbReference type="GeneID" id="77223075"/>
<dbReference type="KEGG" id="pap:PSPA7_5208"/>
<dbReference type="HOGENOM" id="CLU_061463_3_2_6"/>
<dbReference type="Proteomes" id="UP000001582">
    <property type="component" value="Chromosome"/>
</dbReference>
<dbReference type="GO" id="GO:0005737">
    <property type="term" value="C:cytoplasm"/>
    <property type="evidence" value="ECO:0007669"/>
    <property type="project" value="UniProtKB-ARBA"/>
</dbReference>
<dbReference type="GO" id="GO:1990904">
    <property type="term" value="C:ribonucleoprotein complex"/>
    <property type="evidence" value="ECO:0007669"/>
    <property type="project" value="UniProtKB-KW"/>
</dbReference>
<dbReference type="GO" id="GO:0005840">
    <property type="term" value="C:ribosome"/>
    <property type="evidence" value="ECO:0007669"/>
    <property type="project" value="UniProtKB-KW"/>
</dbReference>
<dbReference type="GO" id="GO:0019843">
    <property type="term" value="F:rRNA binding"/>
    <property type="evidence" value="ECO:0007669"/>
    <property type="project" value="UniProtKB-UniRule"/>
</dbReference>
<dbReference type="GO" id="GO:0003735">
    <property type="term" value="F:structural constituent of ribosome"/>
    <property type="evidence" value="ECO:0007669"/>
    <property type="project" value="InterPro"/>
</dbReference>
<dbReference type="GO" id="GO:0006412">
    <property type="term" value="P:translation"/>
    <property type="evidence" value="ECO:0007669"/>
    <property type="project" value="UniProtKB-UniRule"/>
</dbReference>
<dbReference type="HAMAP" id="MF_01363">
    <property type="entry name" value="Ribosomal_bL21"/>
    <property type="match status" value="1"/>
</dbReference>
<dbReference type="InterPro" id="IPR028909">
    <property type="entry name" value="bL21-like"/>
</dbReference>
<dbReference type="InterPro" id="IPR036164">
    <property type="entry name" value="bL21-like_sf"/>
</dbReference>
<dbReference type="InterPro" id="IPR001787">
    <property type="entry name" value="Ribosomal_bL21"/>
</dbReference>
<dbReference type="InterPro" id="IPR018258">
    <property type="entry name" value="Ribosomal_bL21_CS"/>
</dbReference>
<dbReference type="NCBIfam" id="TIGR00061">
    <property type="entry name" value="L21"/>
    <property type="match status" value="1"/>
</dbReference>
<dbReference type="PANTHER" id="PTHR21349">
    <property type="entry name" value="50S RIBOSOMAL PROTEIN L21"/>
    <property type="match status" value="1"/>
</dbReference>
<dbReference type="PANTHER" id="PTHR21349:SF0">
    <property type="entry name" value="LARGE RIBOSOMAL SUBUNIT PROTEIN BL21M"/>
    <property type="match status" value="1"/>
</dbReference>
<dbReference type="Pfam" id="PF00829">
    <property type="entry name" value="Ribosomal_L21p"/>
    <property type="match status" value="1"/>
</dbReference>
<dbReference type="SUPFAM" id="SSF141091">
    <property type="entry name" value="L21p-like"/>
    <property type="match status" value="1"/>
</dbReference>
<dbReference type="PROSITE" id="PS01169">
    <property type="entry name" value="RIBOSOMAL_L21"/>
    <property type="match status" value="1"/>
</dbReference>
<reference key="1">
    <citation type="submission" date="2007-06" db="EMBL/GenBank/DDBJ databases">
        <authorList>
            <person name="Dodson R.J."/>
            <person name="Harkins D."/>
            <person name="Paulsen I.T."/>
        </authorList>
    </citation>
    <scope>NUCLEOTIDE SEQUENCE [LARGE SCALE GENOMIC DNA]</scope>
    <source>
        <strain>DSM 24068 / PA7</strain>
    </source>
</reference>
<comment type="function">
    <text evidence="1">This protein binds to 23S rRNA in the presence of protein L20.</text>
</comment>
<comment type="subunit">
    <text evidence="1">Part of the 50S ribosomal subunit. Contacts protein L20.</text>
</comment>
<comment type="similarity">
    <text evidence="1">Belongs to the bacterial ribosomal protein bL21 family.</text>
</comment>
<evidence type="ECO:0000255" key="1">
    <source>
        <dbReference type="HAMAP-Rule" id="MF_01363"/>
    </source>
</evidence>
<evidence type="ECO:0000305" key="2"/>
<name>RL21_PSEP7</name>
<keyword id="KW-0687">Ribonucleoprotein</keyword>
<keyword id="KW-0689">Ribosomal protein</keyword>
<keyword id="KW-0694">RNA-binding</keyword>
<keyword id="KW-0699">rRNA-binding</keyword>
<accession>A6VBV5</accession>
<protein>
    <recommendedName>
        <fullName evidence="1">Large ribosomal subunit protein bL21</fullName>
    </recommendedName>
    <alternativeName>
        <fullName evidence="2">50S ribosomal protein L21</fullName>
    </alternativeName>
</protein>